<gene>
    <name evidence="1" type="primary">btuF</name>
    <name type="ordered locus">YPTB0746</name>
</gene>
<name>BTUF_YERPS</name>
<evidence type="ECO:0000255" key="1">
    <source>
        <dbReference type="HAMAP-Rule" id="MF_01000"/>
    </source>
</evidence>
<comment type="function">
    <text evidence="1">Part of the ABC transporter complex BtuCDF involved in vitamin B12 import. Binds vitamin B12 and delivers it to the periplasmic surface of BtuC.</text>
</comment>
<comment type="subunit">
    <text evidence="1">The complex is composed of two ATP-binding proteins (BtuD), two transmembrane proteins (BtuC) and a solute-binding protein (BtuF).</text>
</comment>
<comment type="subcellular location">
    <subcellularLocation>
        <location evidence="1">Periplasm</location>
    </subcellularLocation>
</comment>
<comment type="similarity">
    <text evidence="1">Belongs to the BtuF family.</text>
</comment>
<feature type="signal peptide" evidence="1">
    <location>
        <begin position="1"/>
        <end position="27"/>
    </location>
</feature>
<feature type="chain" id="PRO_0000003513" description="Vitamin B12-binding protein">
    <location>
        <begin position="28"/>
        <end position="280"/>
    </location>
</feature>
<feature type="domain" description="Fe/B12 periplasmic-binding" evidence="1">
    <location>
        <begin position="30"/>
        <end position="277"/>
    </location>
</feature>
<feature type="binding site" evidence="1">
    <location>
        <position position="57"/>
    </location>
    <ligand>
        <name>cyanocob(III)alamin</name>
        <dbReference type="ChEBI" id="CHEBI:17439"/>
    </ligand>
</feature>
<feature type="site" description="Important for BtuC binding" evidence="1">
    <location>
        <position position="79"/>
    </location>
</feature>
<feature type="site" description="Important for BtuC binding" evidence="1">
    <location>
        <position position="209"/>
    </location>
</feature>
<feature type="disulfide bond" evidence="1">
    <location>
        <begin position="190"/>
        <end position="266"/>
    </location>
</feature>
<organism>
    <name type="scientific">Yersinia pseudotuberculosis serotype I (strain IP32953)</name>
    <dbReference type="NCBI Taxonomy" id="273123"/>
    <lineage>
        <taxon>Bacteria</taxon>
        <taxon>Pseudomonadati</taxon>
        <taxon>Pseudomonadota</taxon>
        <taxon>Gammaproteobacteria</taxon>
        <taxon>Enterobacterales</taxon>
        <taxon>Yersiniaceae</taxon>
        <taxon>Yersinia</taxon>
    </lineage>
</organism>
<proteinExistence type="inferred from homology"/>
<sequence>MMPLGLFPLPRAAVVLLISLLTLPAQAAERVISLSPSTTELAYAAGLGDKLVAVSAYSDYPESAKKLEHVASWQGINVERILALKPDLILAWRGGNPQRPLDQLAALGIPIFYSDPTHIDQIASDLDKLAQYSPHPEQAHQAAEQFRQHVNTLRDRYARSQPKRTFLQFGTQPLFTSSGHTLQSEVVSLCGGENIFADSRVPWPQVSREQVMTRKPQVIVVSGTQSQVDNVSAFWLPQLVVPVIALNEDWFNRASPRILLAAQQLCQQMASIPTPVAESH</sequence>
<accession>Q66EE7</accession>
<keyword id="KW-1015">Disulfide bond</keyword>
<keyword id="KW-0574">Periplasm</keyword>
<keyword id="KW-0732">Signal</keyword>
<keyword id="KW-0813">Transport</keyword>
<dbReference type="EMBL" id="BX936398">
    <property type="protein sequence ID" value="CAH19986.1"/>
    <property type="molecule type" value="Genomic_DNA"/>
</dbReference>
<dbReference type="RefSeq" id="WP_011191763.1">
    <property type="nucleotide sequence ID" value="NC_006155.1"/>
</dbReference>
<dbReference type="SMR" id="Q66EE7"/>
<dbReference type="GeneID" id="49787249"/>
<dbReference type="KEGG" id="yps:YPTB0746"/>
<dbReference type="Proteomes" id="UP000001011">
    <property type="component" value="Chromosome"/>
</dbReference>
<dbReference type="GO" id="GO:0042597">
    <property type="term" value="C:periplasmic space"/>
    <property type="evidence" value="ECO:0007669"/>
    <property type="project" value="UniProtKB-SubCell"/>
</dbReference>
<dbReference type="GO" id="GO:0031419">
    <property type="term" value="F:cobalamin binding"/>
    <property type="evidence" value="ECO:0007669"/>
    <property type="project" value="InterPro"/>
</dbReference>
<dbReference type="GO" id="GO:0015889">
    <property type="term" value="P:cobalamin transport"/>
    <property type="evidence" value="ECO:0007669"/>
    <property type="project" value="UniProtKB-UniRule"/>
</dbReference>
<dbReference type="CDD" id="cd01144">
    <property type="entry name" value="BtuF"/>
    <property type="match status" value="1"/>
</dbReference>
<dbReference type="Gene3D" id="3.40.50.1980">
    <property type="entry name" value="Nitrogenase molybdenum iron protein domain"/>
    <property type="match status" value="2"/>
</dbReference>
<dbReference type="HAMAP" id="MF_01000">
    <property type="entry name" value="BtuF"/>
    <property type="match status" value="1"/>
</dbReference>
<dbReference type="InterPro" id="IPR002491">
    <property type="entry name" value="ABC_transptr_periplasmic_BD"/>
</dbReference>
<dbReference type="InterPro" id="IPR023544">
    <property type="entry name" value="ABC_transptr_vit_B12-bd"/>
</dbReference>
<dbReference type="InterPro" id="IPR054828">
    <property type="entry name" value="Vit_B12_bind_prot"/>
</dbReference>
<dbReference type="InterPro" id="IPR051030">
    <property type="entry name" value="Vitamin_B12-ABC_binding"/>
</dbReference>
<dbReference type="NCBIfam" id="NF002894">
    <property type="entry name" value="PRK03379.1"/>
    <property type="match status" value="1"/>
</dbReference>
<dbReference type="NCBIfam" id="NF038402">
    <property type="entry name" value="TroA_like"/>
    <property type="match status" value="1"/>
</dbReference>
<dbReference type="PANTHER" id="PTHR42860">
    <property type="entry name" value="VITAMIN B12-BINDING PROTEIN"/>
    <property type="match status" value="1"/>
</dbReference>
<dbReference type="PANTHER" id="PTHR42860:SF1">
    <property type="entry name" value="VITAMIN B12-BINDING PROTEIN"/>
    <property type="match status" value="1"/>
</dbReference>
<dbReference type="Pfam" id="PF01497">
    <property type="entry name" value="Peripla_BP_2"/>
    <property type="match status" value="1"/>
</dbReference>
<dbReference type="SUPFAM" id="SSF53807">
    <property type="entry name" value="Helical backbone' metal receptor"/>
    <property type="match status" value="1"/>
</dbReference>
<dbReference type="PROSITE" id="PS50983">
    <property type="entry name" value="FE_B12_PBP"/>
    <property type="match status" value="1"/>
</dbReference>
<protein>
    <recommendedName>
        <fullName evidence="1">Vitamin B12-binding protein</fullName>
    </recommendedName>
</protein>
<reference key="1">
    <citation type="journal article" date="2004" name="Proc. Natl. Acad. Sci. U.S.A.">
        <title>Insights into the evolution of Yersinia pestis through whole-genome comparison with Yersinia pseudotuberculosis.</title>
        <authorList>
            <person name="Chain P.S.G."/>
            <person name="Carniel E."/>
            <person name="Larimer F.W."/>
            <person name="Lamerdin J."/>
            <person name="Stoutland P.O."/>
            <person name="Regala W.M."/>
            <person name="Georgescu A.M."/>
            <person name="Vergez L.M."/>
            <person name="Land M.L."/>
            <person name="Motin V.L."/>
            <person name="Brubaker R.R."/>
            <person name="Fowler J."/>
            <person name="Hinnebusch J."/>
            <person name="Marceau M."/>
            <person name="Medigue C."/>
            <person name="Simonet M."/>
            <person name="Chenal-Francisque V."/>
            <person name="Souza B."/>
            <person name="Dacheux D."/>
            <person name="Elliott J.M."/>
            <person name="Derbise A."/>
            <person name="Hauser L.J."/>
            <person name="Garcia E."/>
        </authorList>
    </citation>
    <scope>NUCLEOTIDE SEQUENCE [LARGE SCALE GENOMIC DNA]</scope>
    <source>
        <strain>IP32953</strain>
    </source>
</reference>